<evidence type="ECO:0000255" key="1">
    <source>
        <dbReference type="HAMAP-Rule" id="MF_00321"/>
    </source>
</evidence>
<dbReference type="EMBL" id="AE017180">
    <property type="protein sequence ID" value="AAR36405.1"/>
    <property type="molecule type" value="Genomic_DNA"/>
</dbReference>
<dbReference type="RefSeq" id="NP_954055.1">
    <property type="nucleotide sequence ID" value="NC_002939.5"/>
</dbReference>
<dbReference type="RefSeq" id="WP_010943641.1">
    <property type="nucleotide sequence ID" value="NC_002939.5"/>
</dbReference>
<dbReference type="SMR" id="Q748I9"/>
<dbReference type="FunCoup" id="Q748I9">
    <property type="interactions" value="384"/>
</dbReference>
<dbReference type="STRING" id="243231.GSU3013"/>
<dbReference type="EnsemblBacteria" id="AAR36405">
    <property type="protein sequence ID" value="AAR36405"/>
    <property type="gene ID" value="GSU3013"/>
</dbReference>
<dbReference type="KEGG" id="gsu:GSU3013"/>
<dbReference type="PATRIC" id="fig|243231.5.peg.3039"/>
<dbReference type="eggNOG" id="COG0218">
    <property type="taxonomic scope" value="Bacteria"/>
</dbReference>
<dbReference type="HOGENOM" id="CLU_033732_3_0_7"/>
<dbReference type="InParanoid" id="Q748I9"/>
<dbReference type="OrthoDB" id="9804921at2"/>
<dbReference type="Proteomes" id="UP000000577">
    <property type="component" value="Chromosome"/>
</dbReference>
<dbReference type="GO" id="GO:0005829">
    <property type="term" value="C:cytosol"/>
    <property type="evidence" value="ECO:0000318"/>
    <property type="project" value="GO_Central"/>
</dbReference>
<dbReference type="GO" id="GO:0005525">
    <property type="term" value="F:GTP binding"/>
    <property type="evidence" value="ECO:0007669"/>
    <property type="project" value="UniProtKB-UniRule"/>
</dbReference>
<dbReference type="GO" id="GO:0046872">
    <property type="term" value="F:metal ion binding"/>
    <property type="evidence" value="ECO:0007669"/>
    <property type="project" value="UniProtKB-KW"/>
</dbReference>
<dbReference type="GO" id="GO:0000917">
    <property type="term" value="P:division septum assembly"/>
    <property type="evidence" value="ECO:0007669"/>
    <property type="project" value="UniProtKB-KW"/>
</dbReference>
<dbReference type="CDD" id="cd01876">
    <property type="entry name" value="YihA_EngB"/>
    <property type="match status" value="1"/>
</dbReference>
<dbReference type="FunFam" id="3.40.50.300:FF:000098">
    <property type="entry name" value="Probable GTP-binding protein EngB"/>
    <property type="match status" value="1"/>
</dbReference>
<dbReference type="Gene3D" id="3.40.50.300">
    <property type="entry name" value="P-loop containing nucleotide triphosphate hydrolases"/>
    <property type="match status" value="1"/>
</dbReference>
<dbReference type="HAMAP" id="MF_00321">
    <property type="entry name" value="GTPase_EngB"/>
    <property type="match status" value="1"/>
</dbReference>
<dbReference type="InterPro" id="IPR030393">
    <property type="entry name" value="G_ENGB_dom"/>
</dbReference>
<dbReference type="InterPro" id="IPR006073">
    <property type="entry name" value="GTP-bd"/>
</dbReference>
<dbReference type="InterPro" id="IPR019987">
    <property type="entry name" value="GTP-bd_ribosome_bio_YsxC"/>
</dbReference>
<dbReference type="InterPro" id="IPR027417">
    <property type="entry name" value="P-loop_NTPase"/>
</dbReference>
<dbReference type="InterPro" id="IPR005225">
    <property type="entry name" value="Small_GTP-bd"/>
</dbReference>
<dbReference type="NCBIfam" id="TIGR03598">
    <property type="entry name" value="GTPase_YsxC"/>
    <property type="match status" value="1"/>
</dbReference>
<dbReference type="NCBIfam" id="TIGR00231">
    <property type="entry name" value="small_GTP"/>
    <property type="match status" value="1"/>
</dbReference>
<dbReference type="PANTHER" id="PTHR11649:SF13">
    <property type="entry name" value="ENGB-TYPE G DOMAIN-CONTAINING PROTEIN"/>
    <property type="match status" value="1"/>
</dbReference>
<dbReference type="PANTHER" id="PTHR11649">
    <property type="entry name" value="MSS1/TRME-RELATED GTP-BINDING PROTEIN"/>
    <property type="match status" value="1"/>
</dbReference>
<dbReference type="Pfam" id="PF01926">
    <property type="entry name" value="MMR_HSR1"/>
    <property type="match status" value="1"/>
</dbReference>
<dbReference type="SUPFAM" id="SSF52540">
    <property type="entry name" value="P-loop containing nucleoside triphosphate hydrolases"/>
    <property type="match status" value="1"/>
</dbReference>
<dbReference type="PROSITE" id="PS51706">
    <property type="entry name" value="G_ENGB"/>
    <property type="match status" value="1"/>
</dbReference>
<proteinExistence type="inferred from homology"/>
<accession>Q748I9</accession>
<name>ENGB_GEOSL</name>
<keyword id="KW-0131">Cell cycle</keyword>
<keyword id="KW-0132">Cell division</keyword>
<keyword id="KW-0342">GTP-binding</keyword>
<keyword id="KW-0460">Magnesium</keyword>
<keyword id="KW-0479">Metal-binding</keyword>
<keyword id="KW-0547">Nucleotide-binding</keyword>
<keyword id="KW-1185">Reference proteome</keyword>
<keyword id="KW-0717">Septation</keyword>
<sequence>MVNITSAEFVTSGTRPEHYPPGDLLEIAFVGRSNVGKSSLINVLVNRKSLVRTSSTPGRTQLINFFRVNGSLMLVDLPGYGFARVPPEVKRQWGPMVETYLAGRSCLACVVLIVDVRRTPAEEDRLMLQWLRAYDIPVLVVITKCDKVSKNERAKQASLISRTLGLAPDEMAFFSALSREGRDAIWARIEAIMAEGHSPSVDGAPE</sequence>
<feature type="chain" id="PRO_0000266868" description="Probable GTP-binding protein EngB">
    <location>
        <begin position="1"/>
        <end position="206"/>
    </location>
</feature>
<feature type="domain" description="EngB-type G" evidence="1">
    <location>
        <begin position="23"/>
        <end position="195"/>
    </location>
</feature>
<feature type="binding site" evidence="1">
    <location>
        <begin position="31"/>
        <end position="38"/>
    </location>
    <ligand>
        <name>GTP</name>
        <dbReference type="ChEBI" id="CHEBI:37565"/>
    </ligand>
</feature>
<feature type="binding site" evidence="1">
    <location>
        <position position="38"/>
    </location>
    <ligand>
        <name>Mg(2+)</name>
        <dbReference type="ChEBI" id="CHEBI:18420"/>
    </ligand>
</feature>
<feature type="binding site" evidence="1">
    <location>
        <begin position="58"/>
        <end position="62"/>
    </location>
    <ligand>
        <name>GTP</name>
        <dbReference type="ChEBI" id="CHEBI:37565"/>
    </ligand>
</feature>
<feature type="binding site" evidence="1">
    <location>
        <position position="60"/>
    </location>
    <ligand>
        <name>Mg(2+)</name>
        <dbReference type="ChEBI" id="CHEBI:18420"/>
    </ligand>
</feature>
<feature type="binding site" evidence="1">
    <location>
        <begin position="76"/>
        <end position="79"/>
    </location>
    <ligand>
        <name>GTP</name>
        <dbReference type="ChEBI" id="CHEBI:37565"/>
    </ligand>
</feature>
<feature type="binding site" evidence="1">
    <location>
        <begin position="143"/>
        <end position="146"/>
    </location>
    <ligand>
        <name>GTP</name>
        <dbReference type="ChEBI" id="CHEBI:37565"/>
    </ligand>
</feature>
<feature type="binding site" evidence="1">
    <location>
        <begin position="174"/>
        <end position="176"/>
    </location>
    <ligand>
        <name>GTP</name>
        <dbReference type="ChEBI" id="CHEBI:37565"/>
    </ligand>
</feature>
<organism>
    <name type="scientific">Geobacter sulfurreducens (strain ATCC 51573 / DSM 12127 / PCA)</name>
    <dbReference type="NCBI Taxonomy" id="243231"/>
    <lineage>
        <taxon>Bacteria</taxon>
        <taxon>Pseudomonadati</taxon>
        <taxon>Thermodesulfobacteriota</taxon>
        <taxon>Desulfuromonadia</taxon>
        <taxon>Geobacterales</taxon>
        <taxon>Geobacteraceae</taxon>
        <taxon>Geobacter</taxon>
    </lineage>
</organism>
<comment type="function">
    <text evidence="1">Necessary for normal cell division and for the maintenance of normal septation.</text>
</comment>
<comment type="cofactor">
    <cofactor evidence="1">
        <name>Mg(2+)</name>
        <dbReference type="ChEBI" id="CHEBI:18420"/>
    </cofactor>
</comment>
<comment type="similarity">
    <text evidence="1">Belongs to the TRAFAC class TrmE-Era-EngA-EngB-Septin-like GTPase superfamily. EngB GTPase family.</text>
</comment>
<gene>
    <name evidence="1" type="primary">engB</name>
    <name type="ordered locus">GSU3013</name>
</gene>
<reference key="1">
    <citation type="journal article" date="2003" name="Science">
        <title>Genome of Geobacter sulfurreducens: metal reduction in subsurface environments.</title>
        <authorList>
            <person name="Methe B.A."/>
            <person name="Nelson K.E."/>
            <person name="Eisen J.A."/>
            <person name="Paulsen I.T."/>
            <person name="Nelson W.C."/>
            <person name="Heidelberg J.F."/>
            <person name="Wu D."/>
            <person name="Wu M."/>
            <person name="Ward N.L."/>
            <person name="Beanan M.J."/>
            <person name="Dodson R.J."/>
            <person name="Madupu R."/>
            <person name="Brinkac L.M."/>
            <person name="Daugherty S.C."/>
            <person name="DeBoy R.T."/>
            <person name="Durkin A.S."/>
            <person name="Gwinn M.L."/>
            <person name="Kolonay J.F."/>
            <person name="Sullivan S.A."/>
            <person name="Haft D.H."/>
            <person name="Selengut J."/>
            <person name="Davidsen T.M."/>
            <person name="Zafar N."/>
            <person name="White O."/>
            <person name="Tran B."/>
            <person name="Romero C."/>
            <person name="Forberger H.A."/>
            <person name="Weidman J.F."/>
            <person name="Khouri H.M."/>
            <person name="Feldblyum T.V."/>
            <person name="Utterback T.R."/>
            <person name="Van Aken S.E."/>
            <person name="Lovley D.R."/>
            <person name="Fraser C.M."/>
        </authorList>
    </citation>
    <scope>NUCLEOTIDE SEQUENCE [LARGE SCALE GENOMIC DNA]</scope>
    <source>
        <strain>ATCC 51573 / DSM 12127 / PCA</strain>
    </source>
</reference>
<protein>
    <recommendedName>
        <fullName evidence="1">Probable GTP-binding protein EngB</fullName>
    </recommendedName>
</protein>